<keyword id="KW-0963">Cytoplasm</keyword>
<keyword id="KW-0460">Magnesium</keyword>
<keyword id="KW-0479">Metal-binding</keyword>
<keyword id="KW-0548">Nucleotidyltransferase</keyword>
<keyword id="KW-0694">RNA-binding</keyword>
<keyword id="KW-0808">Transferase</keyword>
<protein>
    <recommendedName>
        <fullName evidence="1">Polyribonucleotide nucleotidyltransferase</fullName>
        <ecNumber evidence="1">2.7.7.8</ecNumber>
    </recommendedName>
    <alternativeName>
        <fullName evidence="1">Polynucleotide phosphorylase</fullName>
        <shortName evidence="1">PNPase</shortName>
    </alternativeName>
</protein>
<feature type="chain" id="PRO_0000260054" description="Polyribonucleotide nucleotidyltransferase">
    <location>
        <begin position="1"/>
        <end position="698"/>
    </location>
</feature>
<feature type="domain" description="KH" evidence="1">
    <location>
        <begin position="557"/>
        <end position="616"/>
    </location>
</feature>
<feature type="domain" description="S1 motif" evidence="1">
    <location>
        <begin position="626"/>
        <end position="694"/>
    </location>
</feature>
<feature type="binding site" evidence="1">
    <location>
        <position position="490"/>
    </location>
    <ligand>
        <name>Mg(2+)</name>
        <dbReference type="ChEBI" id="CHEBI:18420"/>
    </ligand>
</feature>
<feature type="binding site" evidence="1">
    <location>
        <position position="496"/>
    </location>
    <ligand>
        <name>Mg(2+)</name>
        <dbReference type="ChEBI" id="CHEBI:18420"/>
    </ligand>
</feature>
<name>PNP_STAAC</name>
<reference key="1">
    <citation type="journal article" date="2005" name="J. Bacteriol.">
        <title>Insights on evolution of virulence and resistance from the complete genome analysis of an early methicillin-resistant Staphylococcus aureus strain and a biofilm-producing methicillin-resistant Staphylococcus epidermidis strain.</title>
        <authorList>
            <person name="Gill S.R."/>
            <person name="Fouts D.E."/>
            <person name="Archer G.L."/>
            <person name="Mongodin E.F."/>
            <person name="DeBoy R.T."/>
            <person name="Ravel J."/>
            <person name="Paulsen I.T."/>
            <person name="Kolonay J.F."/>
            <person name="Brinkac L.M."/>
            <person name="Beanan M.J."/>
            <person name="Dodson R.J."/>
            <person name="Daugherty S.C."/>
            <person name="Madupu R."/>
            <person name="Angiuoli S.V."/>
            <person name="Durkin A.S."/>
            <person name="Haft D.H."/>
            <person name="Vamathevan J.J."/>
            <person name="Khouri H."/>
            <person name="Utterback T.R."/>
            <person name="Lee C."/>
            <person name="Dimitrov G."/>
            <person name="Jiang L."/>
            <person name="Qin H."/>
            <person name="Weidman J."/>
            <person name="Tran K."/>
            <person name="Kang K.H."/>
            <person name="Hance I.R."/>
            <person name="Nelson K.E."/>
            <person name="Fraser C.M."/>
        </authorList>
    </citation>
    <scope>NUCLEOTIDE SEQUENCE [LARGE SCALE GENOMIC DNA]</scope>
    <source>
        <strain>COL</strain>
    </source>
</reference>
<gene>
    <name evidence="1" type="primary">pnp</name>
    <name type="synonym">pnpA</name>
    <name type="ordered locus">SACOL1293</name>
</gene>
<organism>
    <name type="scientific">Staphylococcus aureus (strain COL)</name>
    <dbReference type="NCBI Taxonomy" id="93062"/>
    <lineage>
        <taxon>Bacteria</taxon>
        <taxon>Bacillati</taxon>
        <taxon>Bacillota</taxon>
        <taxon>Bacilli</taxon>
        <taxon>Bacillales</taxon>
        <taxon>Staphylococcaceae</taxon>
        <taxon>Staphylococcus</taxon>
    </lineage>
</organism>
<evidence type="ECO:0000255" key="1">
    <source>
        <dbReference type="HAMAP-Rule" id="MF_01595"/>
    </source>
</evidence>
<comment type="function">
    <text evidence="1">Involved in mRNA degradation. Catalyzes the phosphorolysis of single-stranded polyribonucleotides processively in the 3'- to 5'-direction.</text>
</comment>
<comment type="catalytic activity">
    <reaction evidence="1">
        <text>RNA(n+1) + phosphate = RNA(n) + a ribonucleoside 5'-diphosphate</text>
        <dbReference type="Rhea" id="RHEA:22096"/>
        <dbReference type="Rhea" id="RHEA-COMP:14527"/>
        <dbReference type="Rhea" id="RHEA-COMP:17342"/>
        <dbReference type="ChEBI" id="CHEBI:43474"/>
        <dbReference type="ChEBI" id="CHEBI:57930"/>
        <dbReference type="ChEBI" id="CHEBI:140395"/>
        <dbReference type="EC" id="2.7.7.8"/>
    </reaction>
</comment>
<comment type="cofactor">
    <cofactor evidence="1">
        <name>Mg(2+)</name>
        <dbReference type="ChEBI" id="CHEBI:18420"/>
    </cofactor>
</comment>
<comment type="subcellular location">
    <subcellularLocation>
        <location evidence="1">Cytoplasm</location>
    </subcellularLocation>
</comment>
<comment type="similarity">
    <text evidence="1">Belongs to the polyribonucleotide nucleotidyltransferase family.</text>
</comment>
<accession>Q5HGF7</accession>
<sequence>MSQEKKVFKTEWAGRSLTIETGQLAKQANGAVLVRYGDTVVLSTATASKEPRDGDFFPLTVNYEEKMYAAGKIPGGFKKREGRPGDDATLTARLIDRPIRPLFPKGYKHDVQIMNMVLSADPDCSPQMAAMIGSSMALSVSDIPFQGPIAGVNVGYIDGKYIINPTVEEKEVSRLDLEVAGHKDAVNMVEAGASEITEQEMLEAIFFGHEEIQRLVDFQQQIVDHIQPVKQEFIPAERDEALVERVKSLTEEKGLKETVLTFDKQQRDENLDNLKEEIVNEFIDEEDPENELLIKEVYAILNELVKEEVRRLIADEKIRPDGRKPDEIRPLDSEVGILPRTHGSGLFTRGQTQALSVLTLGALGDYQLIDGLGPEEEKRFMHHYNFPNFSVGETGPVRAPGRREIGHGALGERALKYIIPDTADFPYTIRIVSEVLESNGSSSQASICGSTLALMDAGVPIKAPVAGIAMGLVTREDSYTILTDIQGMEDALGDMDFKVAGTKEGITAIQMDIKIDGLTREIIEEALEQARRGRLEIMNHMLQTIDQPRTELSAYAPKVVTMTIKPDKIRDVIGPGGKKINEIIDETGVKLDIEQDGTIFIGAVDQAMINRAREIIEEITREAEVGQTYQATVKRIEKYGAFVGLFPGKDALLHISQISKNRIEKVEDVLKIGDTIEVKITEIDKQGRVNASHRALEE</sequence>
<proteinExistence type="inferred from homology"/>
<dbReference type="EC" id="2.7.7.8" evidence="1"/>
<dbReference type="EMBL" id="CP000046">
    <property type="protein sequence ID" value="AAW38124.1"/>
    <property type="molecule type" value="Genomic_DNA"/>
</dbReference>
<dbReference type="RefSeq" id="WP_000076690.1">
    <property type="nucleotide sequence ID" value="NZ_JBGOFO010000002.1"/>
</dbReference>
<dbReference type="SMR" id="Q5HGF7"/>
<dbReference type="KEGG" id="sac:SACOL1293"/>
<dbReference type="HOGENOM" id="CLU_004217_2_2_9"/>
<dbReference type="Proteomes" id="UP000000530">
    <property type="component" value="Chromosome"/>
</dbReference>
<dbReference type="GO" id="GO:0005829">
    <property type="term" value="C:cytosol"/>
    <property type="evidence" value="ECO:0007669"/>
    <property type="project" value="TreeGrafter"/>
</dbReference>
<dbReference type="GO" id="GO:0000175">
    <property type="term" value="F:3'-5'-RNA exonuclease activity"/>
    <property type="evidence" value="ECO:0007669"/>
    <property type="project" value="TreeGrafter"/>
</dbReference>
<dbReference type="GO" id="GO:0000287">
    <property type="term" value="F:magnesium ion binding"/>
    <property type="evidence" value="ECO:0007669"/>
    <property type="project" value="UniProtKB-UniRule"/>
</dbReference>
<dbReference type="GO" id="GO:0004654">
    <property type="term" value="F:polyribonucleotide nucleotidyltransferase activity"/>
    <property type="evidence" value="ECO:0007669"/>
    <property type="project" value="UniProtKB-UniRule"/>
</dbReference>
<dbReference type="GO" id="GO:0003723">
    <property type="term" value="F:RNA binding"/>
    <property type="evidence" value="ECO:0007669"/>
    <property type="project" value="UniProtKB-UniRule"/>
</dbReference>
<dbReference type="GO" id="GO:0006402">
    <property type="term" value="P:mRNA catabolic process"/>
    <property type="evidence" value="ECO:0007669"/>
    <property type="project" value="UniProtKB-UniRule"/>
</dbReference>
<dbReference type="GO" id="GO:0006396">
    <property type="term" value="P:RNA processing"/>
    <property type="evidence" value="ECO:0007669"/>
    <property type="project" value="InterPro"/>
</dbReference>
<dbReference type="CDD" id="cd02393">
    <property type="entry name" value="KH-I_PNPase"/>
    <property type="match status" value="1"/>
</dbReference>
<dbReference type="CDD" id="cd11363">
    <property type="entry name" value="RNase_PH_PNPase_1"/>
    <property type="match status" value="1"/>
</dbReference>
<dbReference type="CDD" id="cd11364">
    <property type="entry name" value="RNase_PH_PNPase_2"/>
    <property type="match status" value="1"/>
</dbReference>
<dbReference type="CDD" id="cd04472">
    <property type="entry name" value="S1_PNPase"/>
    <property type="match status" value="1"/>
</dbReference>
<dbReference type="FunFam" id="2.40.50.140:FF:000023">
    <property type="entry name" value="Polyribonucleotide nucleotidyltransferase"/>
    <property type="match status" value="1"/>
</dbReference>
<dbReference type="FunFam" id="3.30.1370.10:FF:000001">
    <property type="entry name" value="Polyribonucleotide nucleotidyltransferase"/>
    <property type="match status" value="1"/>
</dbReference>
<dbReference type="FunFam" id="3.30.230.70:FF:000001">
    <property type="entry name" value="Polyribonucleotide nucleotidyltransferase"/>
    <property type="match status" value="1"/>
</dbReference>
<dbReference type="FunFam" id="3.30.230.70:FF:000002">
    <property type="entry name" value="Polyribonucleotide nucleotidyltransferase"/>
    <property type="match status" value="1"/>
</dbReference>
<dbReference type="Gene3D" id="3.30.230.70">
    <property type="entry name" value="GHMP Kinase, N-terminal domain"/>
    <property type="match status" value="2"/>
</dbReference>
<dbReference type="Gene3D" id="3.30.1370.10">
    <property type="entry name" value="K Homology domain, type 1"/>
    <property type="match status" value="1"/>
</dbReference>
<dbReference type="Gene3D" id="2.40.50.140">
    <property type="entry name" value="Nucleic acid-binding proteins"/>
    <property type="match status" value="1"/>
</dbReference>
<dbReference type="HAMAP" id="MF_01595">
    <property type="entry name" value="PNPase"/>
    <property type="match status" value="1"/>
</dbReference>
<dbReference type="InterPro" id="IPR001247">
    <property type="entry name" value="ExoRNase_PH_dom1"/>
</dbReference>
<dbReference type="InterPro" id="IPR015847">
    <property type="entry name" value="ExoRNase_PH_dom2"/>
</dbReference>
<dbReference type="InterPro" id="IPR036345">
    <property type="entry name" value="ExoRNase_PH_dom2_sf"/>
</dbReference>
<dbReference type="InterPro" id="IPR004087">
    <property type="entry name" value="KH_dom"/>
</dbReference>
<dbReference type="InterPro" id="IPR004088">
    <property type="entry name" value="KH_dom_type_1"/>
</dbReference>
<dbReference type="InterPro" id="IPR036612">
    <property type="entry name" value="KH_dom_type_1_sf"/>
</dbReference>
<dbReference type="InterPro" id="IPR012340">
    <property type="entry name" value="NA-bd_OB-fold"/>
</dbReference>
<dbReference type="InterPro" id="IPR012162">
    <property type="entry name" value="PNPase"/>
</dbReference>
<dbReference type="InterPro" id="IPR027408">
    <property type="entry name" value="PNPase/RNase_PH_dom_sf"/>
</dbReference>
<dbReference type="InterPro" id="IPR015848">
    <property type="entry name" value="PNPase_PH_RNA-bd_bac/org-type"/>
</dbReference>
<dbReference type="InterPro" id="IPR036456">
    <property type="entry name" value="PNPase_PH_RNA-bd_sf"/>
</dbReference>
<dbReference type="InterPro" id="IPR020568">
    <property type="entry name" value="Ribosomal_Su5_D2-typ_SF"/>
</dbReference>
<dbReference type="InterPro" id="IPR003029">
    <property type="entry name" value="S1_domain"/>
</dbReference>
<dbReference type="NCBIfam" id="TIGR03591">
    <property type="entry name" value="polynuc_phos"/>
    <property type="match status" value="1"/>
</dbReference>
<dbReference type="NCBIfam" id="NF008805">
    <property type="entry name" value="PRK11824.1"/>
    <property type="match status" value="1"/>
</dbReference>
<dbReference type="PANTHER" id="PTHR11252">
    <property type="entry name" value="POLYRIBONUCLEOTIDE NUCLEOTIDYLTRANSFERASE"/>
    <property type="match status" value="1"/>
</dbReference>
<dbReference type="PANTHER" id="PTHR11252:SF0">
    <property type="entry name" value="POLYRIBONUCLEOTIDE NUCLEOTIDYLTRANSFERASE 1, MITOCHONDRIAL"/>
    <property type="match status" value="1"/>
</dbReference>
<dbReference type="Pfam" id="PF00013">
    <property type="entry name" value="KH_1"/>
    <property type="match status" value="1"/>
</dbReference>
<dbReference type="Pfam" id="PF03726">
    <property type="entry name" value="PNPase"/>
    <property type="match status" value="1"/>
</dbReference>
<dbReference type="Pfam" id="PF01138">
    <property type="entry name" value="RNase_PH"/>
    <property type="match status" value="2"/>
</dbReference>
<dbReference type="Pfam" id="PF03725">
    <property type="entry name" value="RNase_PH_C"/>
    <property type="match status" value="2"/>
</dbReference>
<dbReference type="Pfam" id="PF00575">
    <property type="entry name" value="S1"/>
    <property type="match status" value="1"/>
</dbReference>
<dbReference type="PIRSF" id="PIRSF005499">
    <property type="entry name" value="PNPase"/>
    <property type="match status" value="1"/>
</dbReference>
<dbReference type="SMART" id="SM00322">
    <property type="entry name" value="KH"/>
    <property type="match status" value="1"/>
</dbReference>
<dbReference type="SMART" id="SM00316">
    <property type="entry name" value="S1"/>
    <property type="match status" value="1"/>
</dbReference>
<dbReference type="SUPFAM" id="SSF54791">
    <property type="entry name" value="Eukaryotic type KH-domain (KH-domain type I)"/>
    <property type="match status" value="1"/>
</dbReference>
<dbReference type="SUPFAM" id="SSF50249">
    <property type="entry name" value="Nucleic acid-binding proteins"/>
    <property type="match status" value="1"/>
</dbReference>
<dbReference type="SUPFAM" id="SSF46915">
    <property type="entry name" value="Polynucleotide phosphorylase/guanosine pentaphosphate synthase (PNPase/GPSI), domain 3"/>
    <property type="match status" value="1"/>
</dbReference>
<dbReference type="SUPFAM" id="SSF55666">
    <property type="entry name" value="Ribonuclease PH domain 2-like"/>
    <property type="match status" value="2"/>
</dbReference>
<dbReference type="SUPFAM" id="SSF54211">
    <property type="entry name" value="Ribosomal protein S5 domain 2-like"/>
    <property type="match status" value="2"/>
</dbReference>
<dbReference type="PROSITE" id="PS50084">
    <property type="entry name" value="KH_TYPE_1"/>
    <property type="match status" value="1"/>
</dbReference>
<dbReference type="PROSITE" id="PS50126">
    <property type="entry name" value="S1"/>
    <property type="match status" value="1"/>
</dbReference>